<sequence>MTIFNAVDKFTMMSGDRVKIKDLLSSRLTECGWRDEVRLLCRSILQEKGAISSFTVEQLVTEVTPRARSLVPDAVKKELLIKIRTIFDENEADDIDPEEA</sequence>
<keyword id="KW-0010">Activator</keyword>
<keyword id="KW-0156">Chromatin regulator</keyword>
<keyword id="KW-0963">Cytoplasm</keyword>
<keyword id="KW-0509">mRNA transport</keyword>
<keyword id="KW-0539">Nucleus</keyword>
<keyword id="KW-0653">Protein transport</keyword>
<keyword id="KW-1185">Reference proteome</keyword>
<keyword id="KW-0804">Transcription</keyword>
<keyword id="KW-0805">Transcription regulation</keyword>
<keyword id="KW-0811">Translocation</keyword>
<keyword id="KW-0813">Transport</keyword>
<proteinExistence type="inferred from homology"/>
<name>ENY2_DROPS</name>
<organism>
    <name type="scientific">Drosophila pseudoobscura pseudoobscura</name>
    <name type="common">Fruit fly</name>
    <dbReference type="NCBI Taxonomy" id="46245"/>
    <lineage>
        <taxon>Eukaryota</taxon>
        <taxon>Metazoa</taxon>
        <taxon>Ecdysozoa</taxon>
        <taxon>Arthropoda</taxon>
        <taxon>Hexapoda</taxon>
        <taxon>Insecta</taxon>
        <taxon>Pterygota</taxon>
        <taxon>Neoptera</taxon>
        <taxon>Endopterygota</taxon>
        <taxon>Diptera</taxon>
        <taxon>Brachycera</taxon>
        <taxon>Muscomorpha</taxon>
        <taxon>Ephydroidea</taxon>
        <taxon>Drosophilidae</taxon>
        <taxon>Drosophila</taxon>
        <taxon>Sophophora</taxon>
    </lineage>
</organism>
<gene>
    <name evidence="2" type="primary">e(y)2</name>
    <name type="ORF">GA13559</name>
</gene>
<reference key="1">
    <citation type="journal article" date="2005" name="Genome Res.">
        <title>Comparative genome sequencing of Drosophila pseudoobscura: chromosomal, gene, and cis-element evolution.</title>
        <authorList>
            <person name="Richards S."/>
            <person name="Liu Y."/>
            <person name="Bettencourt B.R."/>
            <person name="Hradecky P."/>
            <person name="Letovsky S."/>
            <person name="Nielsen R."/>
            <person name="Thornton K."/>
            <person name="Hubisz M.J."/>
            <person name="Chen R."/>
            <person name="Meisel R.P."/>
            <person name="Couronne O."/>
            <person name="Hua S."/>
            <person name="Smith M.A."/>
            <person name="Zhang P."/>
            <person name="Liu J."/>
            <person name="Bussemaker H.J."/>
            <person name="van Batenburg M.F."/>
            <person name="Howells S.L."/>
            <person name="Scherer S.E."/>
            <person name="Sodergren E."/>
            <person name="Matthews B.B."/>
            <person name="Crosby M.A."/>
            <person name="Schroeder A.J."/>
            <person name="Ortiz-Barrientos D."/>
            <person name="Rives C.M."/>
            <person name="Metzker M.L."/>
            <person name="Muzny D.M."/>
            <person name="Scott G."/>
            <person name="Steffen D."/>
            <person name="Wheeler D.A."/>
            <person name="Worley K.C."/>
            <person name="Havlak P."/>
            <person name="Durbin K.J."/>
            <person name="Egan A."/>
            <person name="Gill R."/>
            <person name="Hume J."/>
            <person name="Morgan M.B."/>
            <person name="Miner G."/>
            <person name="Hamilton C."/>
            <person name="Huang Y."/>
            <person name="Waldron L."/>
            <person name="Verduzco D."/>
            <person name="Clerc-Blankenburg K.P."/>
            <person name="Dubchak I."/>
            <person name="Noor M.A.F."/>
            <person name="Anderson W."/>
            <person name="White K.P."/>
            <person name="Clark A.G."/>
            <person name="Schaeffer S.W."/>
            <person name="Gelbart W.M."/>
            <person name="Weinstock G.M."/>
            <person name="Gibbs R.A."/>
        </authorList>
    </citation>
    <scope>NUCLEOTIDE SEQUENCE [LARGE SCALE GENOMIC DNA]</scope>
    <source>
        <strain>MV2-25 / Tucson 14011-0121.94</strain>
    </source>
</reference>
<comment type="function">
    <text evidence="1">Involved in mRNA export coupled transcription activation by association with both the AMEX and the SAGA complexes. The SAGA complex is a multiprotein complex that activates transcription by remodeling chromatin and mediating histone acetylation and deubiquitination. Within the SAGA complex, participates in a subcomplex that specifically deubiquitinates histone H2B. The SAGA complex is recruited to specific gene promoters by activators, where it is required for transcription. Required for nuclear receptor-mediated transactivation. Involved in transcription elongation by recruiting the THO complex onto nascent mRNA. The AMEX complex functions in docking export-competent ribonucleoprotein particles (mRNPs) to the nuclear entrance of the nuclear pore complex (nuclear basket). AMEX participates in mRNA export and accurate chromatin positioning in the nucleus by tethering genes to the nuclear periphery (By similarity).</text>
</comment>
<comment type="subunit">
    <text evidence="2">Component of the nuclear pore complex (NPC)-associated AMEX complex (anchoring and mRNA export complex), composed of at least e(y)2 and xmas-2. Component of the SAGA transcription coactivator-HAT complexes, at least composed of Ada2b, e(y)2, Pcaf/Gcn5, Taf10 and Nipped-A/Trrap. Within the SAGA complex, e(y)2, Sgf11, and not/nonstop form an additional subcomplex of SAGA called the DUB module (deubiquitination module). Component of the THO complex, composed of at least e(y)2, HPR1, THO2, THOC5, THOC6 and THOC7. Interacts with e(y)1. Interacts with su(Hw) (via zinc fingers). Interacts with xmas-2; required for localization to the nuclear periphery. Interacts with the nuclear pore complex (NPC).</text>
</comment>
<comment type="subcellular location">
    <subcellularLocation>
        <location evidence="2">Nucleus</location>
        <location evidence="2">Nucleoplasm</location>
    </subcellularLocation>
    <subcellularLocation>
        <location evidence="2">Cytoplasm</location>
    </subcellularLocation>
</comment>
<comment type="similarity">
    <text evidence="2">Belongs to the ENY2 family.</text>
</comment>
<accession>Q29IN4</accession>
<protein>
    <recommendedName>
        <fullName evidence="2">Enhancer of yellow 2 transcription factor</fullName>
    </recommendedName>
</protein>
<feature type="chain" id="PRO_0000367558" description="Enhancer of yellow 2 transcription factor">
    <location>
        <begin position="1"/>
        <end position="100"/>
    </location>
</feature>
<dbReference type="EMBL" id="CH379063">
    <property type="protein sequence ID" value="EAL32620.2"/>
    <property type="molecule type" value="Genomic_DNA"/>
</dbReference>
<dbReference type="SMR" id="Q29IN4"/>
<dbReference type="FunCoup" id="Q29IN4">
    <property type="interactions" value="1653"/>
</dbReference>
<dbReference type="STRING" id="46245.Q29IN4"/>
<dbReference type="eggNOG" id="KOG4479">
    <property type="taxonomic scope" value="Eukaryota"/>
</dbReference>
<dbReference type="HOGENOM" id="CLU_134052_1_2_1"/>
<dbReference type="InParanoid" id="Q29IN4"/>
<dbReference type="OMA" id="RLMCRNI"/>
<dbReference type="Proteomes" id="UP000001819">
    <property type="component" value="Unplaced"/>
</dbReference>
<dbReference type="GO" id="GO:0005737">
    <property type="term" value="C:cytoplasm"/>
    <property type="evidence" value="ECO:0007669"/>
    <property type="project" value="UniProtKB-SubCell"/>
</dbReference>
<dbReference type="GO" id="GO:0071819">
    <property type="term" value="C:DUBm complex"/>
    <property type="evidence" value="ECO:0007669"/>
    <property type="project" value="UniProtKB-UniRule"/>
</dbReference>
<dbReference type="GO" id="GO:0005643">
    <property type="term" value="C:nuclear pore"/>
    <property type="evidence" value="ECO:0000250"/>
    <property type="project" value="UniProtKB"/>
</dbReference>
<dbReference type="GO" id="GO:0005654">
    <property type="term" value="C:nucleoplasm"/>
    <property type="evidence" value="ECO:0007669"/>
    <property type="project" value="UniProtKB-SubCell"/>
</dbReference>
<dbReference type="GO" id="GO:0000124">
    <property type="term" value="C:SAGA complex"/>
    <property type="evidence" value="ECO:0000250"/>
    <property type="project" value="UniProtKB"/>
</dbReference>
<dbReference type="GO" id="GO:0070390">
    <property type="term" value="C:transcription export complex 2"/>
    <property type="evidence" value="ECO:0007669"/>
    <property type="project" value="UniProtKB-UniRule"/>
</dbReference>
<dbReference type="GO" id="GO:0043035">
    <property type="term" value="F:chromatin insulator sequence binding"/>
    <property type="evidence" value="ECO:0000250"/>
    <property type="project" value="UniProtKB"/>
</dbReference>
<dbReference type="GO" id="GO:0003713">
    <property type="term" value="F:transcription coactivator activity"/>
    <property type="evidence" value="ECO:0007669"/>
    <property type="project" value="UniProtKB-UniRule"/>
</dbReference>
<dbReference type="GO" id="GO:0006325">
    <property type="term" value="P:chromatin organization"/>
    <property type="evidence" value="ECO:0007669"/>
    <property type="project" value="UniProtKB-KW"/>
</dbReference>
<dbReference type="GO" id="GO:0006406">
    <property type="term" value="P:mRNA export from nucleus"/>
    <property type="evidence" value="ECO:0000250"/>
    <property type="project" value="UniProtKB"/>
</dbReference>
<dbReference type="GO" id="GO:0045944">
    <property type="term" value="P:positive regulation of transcription by RNA polymerase II"/>
    <property type="evidence" value="ECO:0000250"/>
    <property type="project" value="UniProtKB"/>
</dbReference>
<dbReference type="GO" id="GO:0015031">
    <property type="term" value="P:protein transport"/>
    <property type="evidence" value="ECO:0007669"/>
    <property type="project" value="UniProtKB-KW"/>
</dbReference>
<dbReference type="GO" id="GO:0006368">
    <property type="term" value="P:transcription elongation by RNA polymerase II"/>
    <property type="evidence" value="ECO:0007669"/>
    <property type="project" value="UniProtKB-UniRule"/>
</dbReference>
<dbReference type="FunFam" id="1.10.246.140:FF:000002">
    <property type="entry name" value="Enhancer of yellow 2 transcription factor"/>
    <property type="match status" value="1"/>
</dbReference>
<dbReference type="Gene3D" id="1.10.246.140">
    <property type="match status" value="1"/>
</dbReference>
<dbReference type="HAMAP" id="MF_03046">
    <property type="entry name" value="ENY2_Sus1"/>
    <property type="match status" value="1"/>
</dbReference>
<dbReference type="InterPro" id="IPR018783">
    <property type="entry name" value="TF_ENY2"/>
</dbReference>
<dbReference type="InterPro" id="IPR038212">
    <property type="entry name" value="TF_EnY2_sf"/>
</dbReference>
<dbReference type="PANTHER" id="PTHR12514">
    <property type="entry name" value="ENHANCER OF YELLOW 2 TRANSCRIPTION FACTOR"/>
    <property type="match status" value="1"/>
</dbReference>
<dbReference type="Pfam" id="PF10163">
    <property type="entry name" value="EnY2"/>
    <property type="match status" value="1"/>
</dbReference>
<evidence type="ECO:0000250" key="1"/>
<evidence type="ECO:0000255" key="2">
    <source>
        <dbReference type="HAMAP-Rule" id="MF_03046"/>
    </source>
</evidence>